<proteinExistence type="inferred from homology"/>
<organism>
    <name type="scientific">Acinetobacter baumannii (strain AB307-0294)</name>
    <dbReference type="NCBI Taxonomy" id="557600"/>
    <lineage>
        <taxon>Bacteria</taxon>
        <taxon>Pseudomonadati</taxon>
        <taxon>Pseudomonadota</taxon>
        <taxon>Gammaproteobacteria</taxon>
        <taxon>Moraxellales</taxon>
        <taxon>Moraxellaceae</taxon>
        <taxon>Acinetobacter</taxon>
        <taxon>Acinetobacter calcoaceticus/baumannii complex</taxon>
    </lineage>
</organism>
<reference key="1">
    <citation type="journal article" date="2008" name="J. Bacteriol.">
        <title>Comparative genome sequence analysis of multidrug-resistant Acinetobacter baumannii.</title>
        <authorList>
            <person name="Adams M.D."/>
            <person name="Goglin K."/>
            <person name="Molyneaux N."/>
            <person name="Hujer K.M."/>
            <person name="Lavender H."/>
            <person name="Jamison J.J."/>
            <person name="MacDonald I.J."/>
            <person name="Martin K.M."/>
            <person name="Russo T."/>
            <person name="Campagnari A.A."/>
            <person name="Hujer A.M."/>
            <person name="Bonomo R.A."/>
            <person name="Gill S.R."/>
        </authorList>
    </citation>
    <scope>NUCLEOTIDE SEQUENCE [LARGE SCALE GENOMIC DNA]</scope>
    <source>
        <strain>AB307-0294</strain>
    </source>
</reference>
<feature type="chain" id="PRO_1000118594" description="4-hydroxy-3-methylbut-2-enyl diphosphate reductase">
    <location>
        <begin position="1"/>
        <end position="316"/>
    </location>
</feature>
<feature type="active site" description="Proton donor" evidence="1">
    <location>
        <position position="126"/>
    </location>
</feature>
<feature type="binding site" evidence="1">
    <location>
        <position position="12"/>
    </location>
    <ligand>
        <name>[4Fe-4S] cluster</name>
        <dbReference type="ChEBI" id="CHEBI:49883"/>
    </ligand>
</feature>
<feature type="binding site" evidence="1">
    <location>
        <position position="41"/>
    </location>
    <ligand>
        <name>(2E)-4-hydroxy-3-methylbut-2-enyl diphosphate</name>
        <dbReference type="ChEBI" id="CHEBI:128753"/>
    </ligand>
</feature>
<feature type="binding site" evidence="1">
    <location>
        <position position="41"/>
    </location>
    <ligand>
        <name>dimethylallyl diphosphate</name>
        <dbReference type="ChEBI" id="CHEBI:57623"/>
    </ligand>
</feature>
<feature type="binding site" evidence="1">
    <location>
        <position position="41"/>
    </location>
    <ligand>
        <name>isopentenyl diphosphate</name>
        <dbReference type="ChEBI" id="CHEBI:128769"/>
    </ligand>
</feature>
<feature type="binding site" evidence="1">
    <location>
        <position position="74"/>
    </location>
    <ligand>
        <name>(2E)-4-hydroxy-3-methylbut-2-enyl diphosphate</name>
        <dbReference type="ChEBI" id="CHEBI:128753"/>
    </ligand>
</feature>
<feature type="binding site" evidence="1">
    <location>
        <position position="74"/>
    </location>
    <ligand>
        <name>dimethylallyl diphosphate</name>
        <dbReference type="ChEBI" id="CHEBI:57623"/>
    </ligand>
</feature>
<feature type="binding site" evidence="1">
    <location>
        <position position="74"/>
    </location>
    <ligand>
        <name>isopentenyl diphosphate</name>
        <dbReference type="ChEBI" id="CHEBI:128769"/>
    </ligand>
</feature>
<feature type="binding site" evidence="1">
    <location>
        <position position="96"/>
    </location>
    <ligand>
        <name>[4Fe-4S] cluster</name>
        <dbReference type="ChEBI" id="CHEBI:49883"/>
    </ligand>
</feature>
<feature type="binding site" evidence="1">
    <location>
        <position position="124"/>
    </location>
    <ligand>
        <name>(2E)-4-hydroxy-3-methylbut-2-enyl diphosphate</name>
        <dbReference type="ChEBI" id="CHEBI:128753"/>
    </ligand>
</feature>
<feature type="binding site" evidence="1">
    <location>
        <position position="124"/>
    </location>
    <ligand>
        <name>dimethylallyl diphosphate</name>
        <dbReference type="ChEBI" id="CHEBI:57623"/>
    </ligand>
</feature>
<feature type="binding site" evidence="1">
    <location>
        <position position="124"/>
    </location>
    <ligand>
        <name>isopentenyl diphosphate</name>
        <dbReference type="ChEBI" id="CHEBI:128769"/>
    </ligand>
</feature>
<feature type="binding site" evidence="1">
    <location>
        <position position="168"/>
    </location>
    <ligand>
        <name>(2E)-4-hydroxy-3-methylbut-2-enyl diphosphate</name>
        <dbReference type="ChEBI" id="CHEBI:128753"/>
    </ligand>
</feature>
<feature type="binding site" evidence="1">
    <location>
        <position position="198"/>
    </location>
    <ligand>
        <name>[4Fe-4S] cluster</name>
        <dbReference type="ChEBI" id="CHEBI:49883"/>
    </ligand>
</feature>
<feature type="binding site" evidence="1">
    <location>
        <position position="226"/>
    </location>
    <ligand>
        <name>(2E)-4-hydroxy-3-methylbut-2-enyl diphosphate</name>
        <dbReference type="ChEBI" id="CHEBI:128753"/>
    </ligand>
</feature>
<feature type="binding site" evidence="1">
    <location>
        <position position="226"/>
    </location>
    <ligand>
        <name>dimethylallyl diphosphate</name>
        <dbReference type="ChEBI" id="CHEBI:57623"/>
    </ligand>
</feature>
<feature type="binding site" evidence="1">
    <location>
        <position position="226"/>
    </location>
    <ligand>
        <name>isopentenyl diphosphate</name>
        <dbReference type="ChEBI" id="CHEBI:128769"/>
    </ligand>
</feature>
<feature type="binding site" evidence="1">
    <location>
        <position position="227"/>
    </location>
    <ligand>
        <name>(2E)-4-hydroxy-3-methylbut-2-enyl diphosphate</name>
        <dbReference type="ChEBI" id="CHEBI:128753"/>
    </ligand>
</feature>
<feature type="binding site" evidence="1">
    <location>
        <position position="227"/>
    </location>
    <ligand>
        <name>dimethylallyl diphosphate</name>
        <dbReference type="ChEBI" id="CHEBI:57623"/>
    </ligand>
</feature>
<feature type="binding site" evidence="1">
    <location>
        <position position="227"/>
    </location>
    <ligand>
        <name>isopentenyl diphosphate</name>
        <dbReference type="ChEBI" id="CHEBI:128769"/>
    </ligand>
</feature>
<feature type="binding site" evidence="1">
    <location>
        <position position="228"/>
    </location>
    <ligand>
        <name>(2E)-4-hydroxy-3-methylbut-2-enyl diphosphate</name>
        <dbReference type="ChEBI" id="CHEBI:128753"/>
    </ligand>
</feature>
<feature type="binding site" evidence="1">
    <location>
        <position position="228"/>
    </location>
    <ligand>
        <name>dimethylallyl diphosphate</name>
        <dbReference type="ChEBI" id="CHEBI:57623"/>
    </ligand>
</feature>
<feature type="binding site" evidence="1">
    <location>
        <position position="228"/>
    </location>
    <ligand>
        <name>isopentenyl diphosphate</name>
        <dbReference type="ChEBI" id="CHEBI:128769"/>
    </ligand>
</feature>
<feature type="binding site" evidence="1">
    <location>
        <position position="270"/>
    </location>
    <ligand>
        <name>(2E)-4-hydroxy-3-methylbut-2-enyl diphosphate</name>
        <dbReference type="ChEBI" id="CHEBI:128753"/>
    </ligand>
</feature>
<feature type="binding site" evidence="1">
    <location>
        <position position="270"/>
    </location>
    <ligand>
        <name>dimethylallyl diphosphate</name>
        <dbReference type="ChEBI" id="CHEBI:57623"/>
    </ligand>
</feature>
<feature type="binding site" evidence="1">
    <location>
        <position position="270"/>
    </location>
    <ligand>
        <name>isopentenyl diphosphate</name>
        <dbReference type="ChEBI" id="CHEBI:128769"/>
    </ligand>
</feature>
<sequence>MEIVLANPRGFCAGVDRAIAIVNRALECFNPPIYVRHEVVHNKFVVDDLRQRGAVFVDELDQVPDDSIVIFSAHGVSKAVQQEAERRGLKVFDATCPLVTKVHIEVTKYAREGTEAILIGHEGHPEVEGTMGQYDKLKGGDIYLVEDEADVAALEVRHPEKLAFVTQTTLSIDDTAKVIDALRAKFPNIQGPRKDDICYATQNRQDAVRDLAEKCDVVLVVGSPNSSNSNRLRELAERMGKAAYLVDNADQLEQSWFNDTCKIGVTAGASAPEILIKQVIQRLQDWGAQAPKELEGREENITFSLPKELRIHVTQA</sequence>
<accession>B7GVR1</accession>
<gene>
    <name evidence="1" type="primary">ispH</name>
    <name type="ordered locus">ABBFA_000341</name>
</gene>
<evidence type="ECO:0000255" key="1">
    <source>
        <dbReference type="HAMAP-Rule" id="MF_00191"/>
    </source>
</evidence>
<keyword id="KW-0004">4Fe-4S</keyword>
<keyword id="KW-0408">Iron</keyword>
<keyword id="KW-0411">Iron-sulfur</keyword>
<keyword id="KW-0414">Isoprene biosynthesis</keyword>
<keyword id="KW-0479">Metal-binding</keyword>
<keyword id="KW-0560">Oxidoreductase</keyword>
<protein>
    <recommendedName>
        <fullName evidence="1">4-hydroxy-3-methylbut-2-enyl diphosphate reductase</fullName>
        <shortName evidence="1">HMBPP reductase</shortName>
        <ecNumber evidence="1">1.17.7.4</ecNumber>
    </recommendedName>
</protein>
<dbReference type="EC" id="1.17.7.4" evidence="1"/>
<dbReference type="EMBL" id="CP001172">
    <property type="protein sequence ID" value="ACJ57384.1"/>
    <property type="molecule type" value="Genomic_DNA"/>
</dbReference>
<dbReference type="RefSeq" id="WP_000407064.1">
    <property type="nucleotide sequence ID" value="NZ_CP001172.1"/>
</dbReference>
<dbReference type="SMR" id="B7GVR1"/>
<dbReference type="GeneID" id="92895407"/>
<dbReference type="HOGENOM" id="CLU_027486_1_0_6"/>
<dbReference type="UniPathway" id="UPA00056">
    <property type="reaction ID" value="UER00097"/>
</dbReference>
<dbReference type="UniPathway" id="UPA00059">
    <property type="reaction ID" value="UER00105"/>
</dbReference>
<dbReference type="Proteomes" id="UP000006924">
    <property type="component" value="Chromosome"/>
</dbReference>
<dbReference type="GO" id="GO:0051539">
    <property type="term" value="F:4 iron, 4 sulfur cluster binding"/>
    <property type="evidence" value="ECO:0007669"/>
    <property type="project" value="UniProtKB-UniRule"/>
</dbReference>
<dbReference type="GO" id="GO:0051745">
    <property type="term" value="F:4-hydroxy-3-methylbut-2-enyl diphosphate reductase activity"/>
    <property type="evidence" value="ECO:0007669"/>
    <property type="project" value="UniProtKB-UniRule"/>
</dbReference>
<dbReference type="GO" id="GO:0046872">
    <property type="term" value="F:metal ion binding"/>
    <property type="evidence" value="ECO:0007669"/>
    <property type="project" value="UniProtKB-KW"/>
</dbReference>
<dbReference type="GO" id="GO:0050992">
    <property type="term" value="P:dimethylallyl diphosphate biosynthetic process"/>
    <property type="evidence" value="ECO:0007669"/>
    <property type="project" value="UniProtKB-UniRule"/>
</dbReference>
<dbReference type="GO" id="GO:0019288">
    <property type="term" value="P:isopentenyl diphosphate biosynthetic process, methylerythritol 4-phosphate pathway"/>
    <property type="evidence" value="ECO:0007669"/>
    <property type="project" value="UniProtKB-UniRule"/>
</dbReference>
<dbReference type="GO" id="GO:0016114">
    <property type="term" value="P:terpenoid biosynthetic process"/>
    <property type="evidence" value="ECO:0007669"/>
    <property type="project" value="UniProtKB-UniRule"/>
</dbReference>
<dbReference type="CDD" id="cd13944">
    <property type="entry name" value="lytB_ispH"/>
    <property type="match status" value="1"/>
</dbReference>
<dbReference type="Gene3D" id="3.40.50.11270">
    <property type="match status" value="1"/>
</dbReference>
<dbReference type="Gene3D" id="3.40.1010.20">
    <property type="entry name" value="4-hydroxy-3-methylbut-2-enyl diphosphate reductase, catalytic domain"/>
    <property type="match status" value="2"/>
</dbReference>
<dbReference type="HAMAP" id="MF_00191">
    <property type="entry name" value="IspH"/>
    <property type="match status" value="1"/>
</dbReference>
<dbReference type="InterPro" id="IPR003451">
    <property type="entry name" value="LytB/IspH"/>
</dbReference>
<dbReference type="NCBIfam" id="TIGR00216">
    <property type="entry name" value="ispH_lytB"/>
    <property type="match status" value="1"/>
</dbReference>
<dbReference type="NCBIfam" id="NF002188">
    <property type="entry name" value="PRK01045.1-2"/>
    <property type="match status" value="1"/>
</dbReference>
<dbReference type="NCBIfam" id="NF002190">
    <property type="entry name" value="PRK01045.1-4"/>
    <property type="match status" value="1"/>
</dbReference>
<dbReference type="PANTHER" id="PTHR30426">
    <property type="entry name" value="4-HYDROXY-3-METHYLBUT-2-ENYL DIPHOSPHATE REDUCTASE"/>
    <property type="match status" value="1"/>
</dbReference>
<dbReference type="PANTHER" id="PTHR30426:SF0">
    <property type="entry name" value="4-HYDROXY-3-METHYLBUT-2-ENYL DIPHOSPHATE REDUCTASE"/>
    <property type="match status" value="1"/>
</dbReference>
<dbReference type="Pfam" id="PF02401">
    <property type="entry name" value="LYTB"/>
    <property type="match status" value="1"/>
</dbReference>
<name>ISPH_ACIB3</name>
<comment type="function">
    <text evidence="1">Catalyzes the conversion of 1-hydroxy-2-methyl-2-(E)-butenyl 4-diphosphate (HMBPP) into a mixture of isopentenyl diphosphate (IPP) and dimethylallyl diphosphate (DMAPP). Acts in the terminal step of the DOXP/MEP pathway for isoprenoid precursor biosynthesis.</text>
</comment>
<comment type="catalytic activity">
    <reaction evidence="1">
        <text>isopentenyl diphosphate + 2 oxidized [2Fe-2S]-[ferredoxin] + H2O = (2E)-4-hydroxy-3-methylbut-2-enyl diphosphate + 2 reduced [2Fe-2S]-[ferredoxin] + 2 H(+)</text>
        <dbReference type="Rhea" id="RHEA:24488"/>
        <dbReference type="Rhea" id="RHEA-COMP:10000"/>
        <dbReference type="Rhea" id="RHEA-COMP:10001"/>
        <dbReference type="ChEBI" id="CHEBI:15377"/>
        <dbReference type="ChEBI" id="CHEBI:15378"/>
        <dbReference type="ChEBI" id="CHEBI:33737"/>
        <dbReference type="ChEBI" id="CHEBI:33738"/>
        <dbReference type="ChEBI" id="CHEBI:128753"/>
        <dbReference type="ChEBI" id="CHEBI:128769"/>
        <dbReference type="EC" id="1.17.7.4"/>
    </reaction>
</comment>
<comment type="catalytic activity">
    <reaction evidence="1">
        <text>dimethylallyl diphosphate + 2 oxidized [2Fe-2S]-[ferredoxin] + H2O = (2E)-4-hydroxy-3-methylbut-2-enyl diphosphate + 2 reduced [2Fe-2S]-[ferredoxin] + 2 H(+)</text>
        <dbReference type="Rhea" id="RHEA:24825"/>
        <dbReference type="Rhea" id="RHEA-COMP:10000"/>
        <dbReference type="Rhea" id="RHEA-COMP:10001"/>
        <dbReference type="ChEBI" id="CHEBI:15377"/>
        <dbReference type="ChEBI" id="CHEBI:15378"/>
        <dbReference type="ChEBI" id="CHEBI:33737"/>
        <dbReference type="ChEBI" id="CHEBI:33738"/>
        <dbReference type="ChEBI" id="CHEBI:57623"/>
        <dbReference type="ChEBI" id="CHEBI:128753"/>
        <dbReference type="EC" id="1.17.7.4"/>
    </reaction>
</comment>
<comment type="cofactor">
    <cofactor evidence="1">
        <name>[4Fe-4S] cluster</name>
        <dbReference type="ChEBI" id="CHEBI:49883"/>
    </cofactor>
    <text evidence="1">Binds 1 [4Fe-4S] cluster per subunit.</text>
</comment>
<comment type="pathway">
    <text evidence="1">Isoprenoid biosynthesis; dimethylallyl diphosphate biosynthesis; dimethylallyl diphosphate from (2E)-4-hydroxy-3-methylbutenyl diphosphate: step 1/1.</text>
</comment>
<comment type="pathway">
    <text evidence="1">Isoprenoid biosynthesis; isopentenyl diphosphate biosynthesis via DXP pathway; isopentenyl diphosphate from 1-deoxy-D-xylulose 5-phosphate: step 6/6.</text>
</comment>
<comment type="similarity">
    <text evidence="1">Belongs to the IspH family.</text>
</comment>